<keyword id="KW-0010">Activator</keyword>
<keyword id="KW-0238">DNA-binding</keyword>
<keyword id="KW-0539">Nucleus</keyword>
<keyword id="KW-0804">Transcription</keyword>
<keyword id="KW-0805">Transcription regulation</keyword>
<sequence>MFGSVRLVQEVTRSNQQTAANTTSPASVDESIIAQEPSNVSDLTSEPVESTQIKQQGNTEASQDIQQEQQQQQTHIHPQQPALSAQQTQQQPALPCWSTPTQHIPISFSAITSPSVLSSYKSRDFRNLFTTTNSSPNPSSPSPSSMKSHTRKNSKYTVRHHRTRQSSFNGTTNPPAYFSSNSILRKQPPTHHPQRNFLQLQQEQQKSKSQKLLCLWPLPTVTRYMILIALFVSTLNCLHILDLSCSAPSFVVYRFDIKNMILSPFLFNWTLPSMALFGWNVLILGLFEESLAHMVGGTRRFIQLLLVLFTTVSLVRVCLGLIFSKATGYAFPSLFFSNTMHECSQGLCVCCIF</sequence>
<accession>Q01214</accession>
<reference evidence="4" key="1">
    <citation type="journal article" date="1996" name="Biochem. Mol. Biol. Int.">
        <title>Cloning and sequence analysis of a putative transcription factor (MTF1) gene from Mucor circinelloides.</title>
        <authorList>
            <person name="Mukhtar M."/>
            <person name="Kaeufer N.F."/>
            <person name="Logan D.A."/>
        </authorList>
    </citation>
    <scope>NUCLEOTIDE SEQUENCE [GENOMIC DNA]</scope>
    <scope>DEVELOPMENTAL STAGE</scope>
    <source>
        <strain>ATCC 1216b / BCRC 32522 / CBS 277.49 / NRRL 3631</strain>
    </source>
</reference>
<name>MTF1_MUCCL</name>
<dbReference type="EMBL" id="U07696">
    <property type="protein sequence ID" value="AAC49306.1"/>
    <property type="molecule type" value="Genomic_DNA"/>
</dbReference>
<dbReference type="GO" id="GO:0005634">
    <property type="term" value="C:nucleus"/>
    <property type="evidence" value="ECO:0007669"/>
    <property type="project" value="UniProtKB-SubCell"/>
</dbReference>
<dbReference type="GO" id="GO:0003677">
    <property type="term" value="F:DNA binding"/>
    <property type="evidence" value="ECO:0007669"/>
    <property type="project" value="UniProtKB-KW"/>
</dbReference>
<dbReference type="GO" id="GO:0003700">
    <property type="term" value="F:DNA-binding transcription factor activity"/>
    <property type="evidence" value="ECO:0000303"/>
    <property type="project" value="UniProtKB"/>
</dbReference>
<dbReference type="GO" id="GO:0006355">
    <property type="term" value="P:regulation of DNA-templated transcription"/>
    <property type="evidence" value="ECO:0000303"/>
    <property type="project" value="UniProtKB"/>
</dbReference>
<gene>
    <name type="primary">MTF1</name>
</gene>
<organism>
    <name type="scientific">Mucor circinelloides f. lusitanicus</name>
    <name type="common">Mucor racemosus var. lusitanicus</name>
    <dbReference type="NCBI Taxonomy" id="29924"/>
    <lineage>
        <taxon>Eukaryota</taxon>
        <taxon>Fungi</taxon>
        <taxon>Fungi incertae sedis</taxon>
        <taxon>Mucoromycota</taxon>
        <taxon>Mucoromycotina</taxon>
        <taxon>Mucoromycetes</taxon>
        <taxon>Mucorales</taxon>
        <taxon>Mucorineae</taxon>
        <taxon>Mucoraceae</taxon>
        <taxon>Mucor</taxon>
    </lineage>
</organism>
<protein>
    <recommendedName>
        <fullName>Putative transcription factor MTF1</fullName>
    </recommendedName>
</protein>
<feature type="chain" id="PRO_0000096618" description="Putative transcription factor MTF1">
    <location>
        <begin position="1"/>
        <end position="353"/>
    </location>
</feature>
<feature type="region of interest" description="Disordered" evidence="1">
    <location>
        <begin position="11"/>
        <end position="96"/>
    </location>
</feature>
<feature type="region of interest" description="Disordered" evidence="1">
    <location>
        <begin position="129"/>
        <end position="174"/>
    </location>
</feature>
<feature type="compositionally biased region" description="Polar residues" evidence="1">
    <location>
        <begin position="11"/>
        <end position="26"/>
    </location>
</feature>
<feature type="compositionally biased region" description="Polar residues" evidence="1">
    <location>
        <begin position="36"/>
        <end position="58"/>
    </location>
</feature>
<feature type="compositionally biased region" description="Low complexity" evidence="1">
    <location>
        <begin position="59"/>
        <end position="95"/>
    </location>
</feature>
<feature type="compositionally biased region" description="Low complexity" evidence="1">
    <location>
        <begin position="133"/>
        <end position="145"/>
    </location>
</feature>
<feature type="compositionally biased region" description="Basic residues" evidence="1">
    <location>
        <begin position="148"/>
        <end position="164"/>
    </location>
</feature>
<feature type="compositionally biased region" description="Polar residues" evidence="1">
    <location>
        <begin position="165"/>
        <end position="174"/>
    </location>
</feature>
<proteinExistence type="evidence at transcript level"/>
<comment type="function">
    <text evidence="3">May be involved in transcriptional activation.</text>
</comment>
<comment type="subcellular location">
    <subcellularLocation>
        <location evidence="4">Nucleus</location>
    </subcellularLocation>
</comment>
<comment type="developmental stage">
    <text evidence="2">Expressed during all stages of the life cycle.</text>
</comment>
<evidence type="ECO:0000256" key="1">
    <source>
        <dbReference type="SAM" id="MobiDB-lite"/>
    </source>
</evidence>
<evidence type="ECO:0000269" key="2">
    <source>
    </source>
</evidence>
<evidence type="ECO:0000303" key="3">
    <source>
    </source>
</evidence>
<evidence type="ECO:0000305" key="4"/>